<accession>C0QKK8</accession>
<comment type="function">
    <text evidence="1">The key enzymatic reactions in nitrogen fixation are catalyzed by the nitrogenase complex, which has 2 components: the iron protein and the molybdenum-iron protein.</text>
</comment>
<comment type="catalytic activity">
    <reaction evidence="1">
        <text>N2 + 8 reduced [2Fe-2S]-[ferredoxin] + 16 ATP + 16 H2O = H2 + 8 oxidized [2Fe-2S]-[ferredoxin] + 2 NH4(+) + 16 ADP + 16 phosphate + 6 H(+)</text>
        <dbReference type="Rhea" id="RHEA:21448"/>
        <dbReference type="Rhea" id="RHEA-COMP:10000"/>
        <dbReference type="Rhea" id="RHEA-COMP:10001"/>
        <dbReference type="ChEBI" id="CHEBI:15377"/>
        <dbReference type="ChEBI" id="CHEBI:15378"/>
        <dbReference type="ChEBI" id="CHEBI:17997"/>
        <dbReference type="ChEBI" id="CHEBI:18276"/>
        <dbReference type="ChEBI" id="CHEBI:28938"/>
        <dbReference type="ChEBI" id="CHEBI:30616"/>
        <dbReference type="ChEBI" id="CHEBI:33737"/>
        <dbReference type="ChEBI" id="CHEBI:33738"/>
        <dbReference type="ChEBI" id="CHEBI:43474"/>
        <dbReference type="ChEBI" id="CHEBI:456216"/>
        <dbReference type="EC" id="1.18.6.1"/>
    </reaction>
</comment>
<comment type="cofactor">
    <cofactor evidence="1">
        <name>[4Fe-4S] cluster</name>
        <dbReference type="ChEBI" id="CHEBI:49883"/>
    </cofactor>
    <text evidence="1">Binds 1 [4Fe-4S] cluster per dimer.</text>
</comment>
<comment type="subunit">
    <text evidence="1">Homodimer.</text>
</comment>
<comment type="PTM">
    <text evidence="1">The reversible ADP-ribosylation of Arg-97 inactivates the nitrogenase reductase and regulates nitrogenase activity.</text>
</comment>
<comment type="similarity">
    <text evidence="1">Belongs to the NifH/BchL/ChlL family.</text>
</comment>
<proteinExistence type="inferred from homology"/>
<name>NIFH_DESAH</name>
<dbReference type="EC" id="1.18.6.1" evidence="1"/>
<dbReference type="EMBL" id="CP001087">
    <property type="protein sequence ID" value="ACN14079.1"/>
    <property type="molecule type" value="Genomic_DNA"/>
</dbReference>
<dbReference type="RefSeq" id="WP_015902868.1">
    <property type="nucleotide sequence ID" value="NC_012108.1"/>
</dbReference>
<dbReference type="SMR" id="C0QKK8"/>
<dbReference type="STRING" id="177437.HRM2_09670"/>
<dbReference type="KEGG" id="dat:HRM2_09670"/>
<dbReference type="eggNOG" id="COG1348">
    <property type="taxonomic scope" value="Bacteria"/>
</dbReference>
<dbReference type="HOGENOM" id="CLU_059373_0_0_7"/>
<dbReference type="OrthoDB" id="9778641at2"/>
<dbReference type="Proteomes" id="UP000000442">
    <property type="component" value="Chromosome"/>
</dbReference>
<dbReference type="GO" id="GO:0051539">
    <property type="term" value="F:4 iron, 4 sulfur cluster binding"/>
    <property type="evidence" value="ECO:0007669"/>
    <property type="project" value="UniProtKB-KW"/>
</dbReference>
<dbReference type="GO" id="GO:0005524">
    <property type="term" value="F:ATP binding"/>
    <property type="evidence" value="ECO:0007669"/>
    <property type="project" value="UniProtKB-UniRule"/>
</dbReference>
<dbReference type="GO" id="GO:0046872">
    <property type="term" value="F:metal ion binding"/>
    <property type="evidence" value="ECO:0007669"/>
    <property type="project" value="UniProtKB-KW"/>
</dbReference>
<dbReference type="GO" id="GO:0016163">
    <property type="term" value="F:nitrogenase activity"/>
    <property type="evidence" value="ECO:0007669"/>
    <property type="project" value="UniProtKB-UniRule"/>
</dbReference>
<dbReference type="GO" id="GO:0009399">
    <property type="term" value="P:nitrogen fixation"/>
    <property type="evidence" value="ECO:0007669"/>
    <property type="project" value="UniProtKB-UniRule"/>
</dbReference>
<dbReference type="CDD" id="cd02040">
    <property type="entry name" value="NifH"/>
    <property type="match status" value="1"/>
</dbReference>
<dbReference type="Gene3D" id="3.40.50.300">
    <property type="entry name" value="P-loop containing nucleotide triphosphate hydrolases"/>
    <property type="match status" value="1"/>
</dbReference>
<dbReference type="HAMAP" id="MF_00533">
    <property type="entry name" value="NifH"/>
    <property type="match status" value="1"/>
</dbReference>
<dbReference type="InterPro" id="IPR030655">
    <property type="entry name" value="NifH/chlL_CS"/>
</dbReference>
<dbReference type="InterPro" id="IPR000392">
    <property type="entry name" value="NifH/frxC"/>
</dbReference>
<dbReference type="InterPro" id="IPR005977">
    <property type="entry name" value="Nitrogenase_Fe_NifH"/>
</dbReference>
<dbReference type="InterPro" id="IPR027417">
    <property type="entry name" value="P-loop_NTPase"/>
</dbReference>
<dbReference type="NCBIfam" id="TIGR01287">
    <property type="entry name" value="nifH"/>
    <property type="match status" value="1"/>
</dbReference>
<dbReference type="PANTHER" id="PTHR42864">
    <property type="entry name" value="LIGHT-INDEPENDENT PROTOCHLOROPHYLLIDE REDUCTASE IRON-SULFUR ATP-BINDING PROTEIN"/>
    <property type="match status" value="1"/>
</dbReference>
<dbReference type="PANTHER" id="PTHR42864:SF2">
    <property type="entry name" value="LIGHT-INDEPENDENT PROTOCHLOROPHYLLIDE REDUCTASE IRON-SULFUR ATP-BINDING PROTEIN"/>
    <property type="match status" value="1"/>
</dbReference>
<dbReference type="Pfam" id="PF00142">
    <property type="entry name" value="Fer4_NifH"/>
    <property type="match status" value="1"/>
</dbReference>
<dbReference type="PIRSF" id="PIRSF000363">
    <property type="entry name" value="Nitrogenase_iron"/>
    <property type="match status" value="1"/>
</dbReference>
<dbReference type="PRINTS" id="PR00091">
    <property type="entry name" value="NITROGNASEII"/>
</dbReference>
<dbReference type="SUPFAM" id="SSF52540">
    <property type="entry name" value="P-loop containing nucleoside triphosphate hydrolases"/>
    <property type="match status" value="1"/>
</dbReference>
<dbReference type="PROSITE" id="PS00746">
    <property type="entry name" value="NIFH_FRXC_1"/>
    <property type="match status" value="1"/>
</dbReference>
<dbReference type="PROSITE" id="PS00692">
    <property type="entry name" value="NIFH_FRXC_2"/>
    <property type="match status" value="1"/>
</dbReference>
<dbReference type="PROSITE" id="PS51026">
    <property type="entry name" value="NIFH_FRXC_3"/>
    <property type="match status" value="1"/>
</dbReference>
<sequence>MRKIAIYGKGGIGKSTTTQNTVAGLVEAGHKIMVVGCDPKADSTRLLLNGLAQKTVLDTLREEGEDVVLEDVLKLGYGGTMCTESGGPEPGVGCAGRGIITSINLLEQLGAYENEELDYVFYDVLGDVVCGGFAMPMREGKAQEIYIVVSGEMMAMYAANNICKGIVKFAESGGIRLGGLICNSRAVDFEKDMIEALAEKLGTQMIHFIPRENVVQRAEINRKTVIEYEPEHSQADEYRMLAKKINENEKYVIPTPIEIEELEELLVTYGIAS</sequence>
<organism>
    <name type="scientific">Desulforapulum autotrophicum (strain ATCC 43914 / DSM 3382 / VKM B-1955 / HRM2)</name>
    <name type="common">Desulfobacterium autotrophicum</name>
    <dbReference type="NCBI Taxonomy" id="177437"/>
    <lineage>
        <taxon>Bacteria</taxon>
        <taxon>Pseudomonadati</taxon>
        <taxon>Thermodesulfobacteriota</taxon>
        <taxon>Desulfobacteria</taxon>
        <taxon>Desulfobacterales</taxon>
        <taxon>Desulfobacteraceae</taxon>
        <taxon>Desulforapulum</taxon>
    </lineage>
</organism>
<feature type="chain" id="PRO_1000211865" description="Nitrogenase iron protein">
    <location>
        <begin position="1"/>
        <end position="273"/>
    </location>
</feature>
<feature type="binding site" evidence="1">
    <location>
        <begin position="8"/>
        <end position="15"/>
    </location>
    <ligand>
        <name>ATP</name>
        <dbReference type="ChEBI" id="CHEBI:30616"/>
    </ligand>
</feature>
<feature type="binding site" evidence="1">
    <location>
        <position position="94"/>
    </location>
    <ligand>
        <name>[4Fe-4S] cluster</name>
        <dbReference type="ChEBI" id="CHEBI:49883"/>
        <note>ligand shared between dimeric partners</note>
    </ligand>
</feature>
<feature type="binding site" evidence="1">
    <location>
        <position position="130"/>
    </location>
    <ligand>
        <name>[4Fe-4S] cluster</name>
        <dbReference type="ChEBI" id="CHEBI:49883"/>
        <note>ligand shared between dimeric partners</note>
    </ligand>
</feature>
<feature type="modified residue" description="ADP-ribosylarginine; by dinitrogenase reductase ADP-ribosyltransferase" evidence="1">
    <location>
        <position position="97"/>
    </location>
</feature>
<protein>
    <recommendedName>
        <fullName evidence="1">Nitrogenase iron protein</fullName>
        <ecNumber evidence="1">1.18.6.1</ecNumber>
    </recommendedName>
    <alternativeName>
        <fullName evidence="1">Nitrogenase Fe protein</fullName>
    </alternativeName>
    <alternativeName>
        <fullName evidence="1">Nitrogenase component II</fullName>
    </alternativeName>
    <alternativeName>
        <fullName evidence="1">Nitrogenase reductase</fullName>
    </alternativeName>
</protein>
<keyword id="KW-0004">4Fe-4S</keyword>
<keyword id="KW-0013">ADP-ribosylation</keyword>
<keyword id="KW-0067">ATP-binding</keyword>
<keyword id="KW-0408">Iron</keyword>
<keyword id="KW-0411">Iron-sulfur</keyword>
<keyword id="KW-0479">Metal-binding</keyword>
<keyword id="KW-0535">Nitrogen fixation</keyword>
<keyword id="KW-0547">Nucleotide-binding</keyword>
<keyword id="KW-0560">Oxidoreductase</keyword>
<keyword id="KW-1185">Reference proteome</keyword>
<gene>
    <name evidence="1" type="primary">nifH</name>
    <name type="ordered locus">HRM2_09670</name>
</gene>
<reference key="1">
    <citation type="journal article" date="2009" name="Environ. Microbiol.">
        <title>Genome sequence of Desulfobacterium autotrophicum HRM2, a marine sulfate reducer oxidizing organic carbon completely to carbon dioxide.</title>
        <authorList>
            <person name="Strittmatter A.W."/>
            <person name="Liesegang H."/>
            <person name="Rabus R."/>
            <person name="Decker I."/>
            <person name="Amann J."/>
            <person name="Andres S."/>
            <person name="Henne A."/>
            <person name="Fricke W.F."/>
            <person name="Martinez-Arias R."/>
            <person name="Bartels D."/>
            <person name="Goesmann A."/>
            <person name="Krause L."/>
            <person name="Puehler A."/>
            <person name="Klenk H.P."/>
            <person name="Richter M."/>
            <person name="Schuler M."/>
            <person name="Gloeckner F.O."/>
            <person name="Meyerdierks A."/>
            <person name="Gottschalk G."/>
            <person name="Amann R."/>
        </authorList>
    </citation>
    <scope>NUCLEOTIDE SEQUENCE [LARGE SCALE GENOMIC DNA]</scope>
    <source>
        <strain>ATCC 43914 / DSM 3382 / VKM B-1955 / HRM2</strain>
    </source>
</reference>
<evidence type="ECO:0000255" key="1">
    <source>
        <dbReference type="HAMAP-Rule" id="MF_00533"/>
    </source>
</evidence>